<proteinExistence type="evidence at protein level"/>
<organism evidence="11">
    <name type="scientific">Drosophila melanogaster</name>
    <name type="common">Fruit fly</name>
    <dbReference type="NCBI Taxonomy" id="7227"/>
    <lineage>
        <taxon>Eukaryota</taxon>
        <taxon>Metazoa</taxon>
        <taxon>Ecdysozoa</taxon>
        <taxon>Arthropoda</taxon>
        <taxon>Hexapoda</taxon>
        <taxon>Insecta</taxon>
        <taxon>Pterygota</taxon>
        <taxon>Neoptera</taxon>
        <taxon>Endopterygota</taxon>
        <taxon>Diptera</taxon>
        <taxon>Brachycera</taxon>
        <taxon>Muscomorpha</taxon>
        <taxon>Ephydroidea</taxon>
        <taxon>Drosophilidae</taxon>
        <taxon>Drosophila</taxon>
        <taxon>Sophophora</taxon>
    </lineage>
</organism>
<sequence>MFRSSFDKNLENATSHLRLEPDWPSILLICDEINQKDVTPKNAFAAIKKKMNSPNPHSSCYSLLVLESIVKNCGAPVHEEVFTKENCEMFSSFLESTPHENVRQKMLELVQTWAYAFRSSDKYQAIKDTMTILKAKGHTFPELREADAMFTADTAPNWADGRVCHRCRVEFTFTNRKHHCRNCGQVFCGQCTAKQCPLPKYGIEKEVRVCDGCFAALQRPTSGSGGAKSGPRPADSELPAEYLNSTLAQQVQTPARKTEQELKEEEELQLALALSQSEAEQQKPKLQSLPPAAYRMQQRSPSPEAPPEPKEYHQQPEEATNPELAKYLNRSYWEQRKISESSSMASPSAPSPMPPTPQPQQIMPLQVKSADEVQIDEFAANMRTQVEIFVNRMKSNSSRGRSISNDSSVQTLFMTLTSLHSQQLSYIKEMDDKRMWYEQLQDKLTQIKDSRAALDQLRQEHVEKLRRIAEEQERQRQMQMAQKLDIMRKKKQEYLQYQRQLALQRIQEQEREMQLRQEQQKAQYLMGQSAPPFPYMPPSAVPQHGSPSHQLNNVYNPYAAGVPGYLPQGPAPAPNGHGQFQAIPPGMYNPAIQQPMPPNLQPGGLMQQPAPPGNPQMMPPMPENQFANNPAAILQLPQQHSIAQPPQIPFQPQPQQIPGQQPQQIPGQQPQQIPGQQPQQIPGQQPQQIPVQQPQPQPQMGHVMLQQHQAPPAAQAPPVTEIANNQVQAVAAAPAPPQNEPGPAPVKAEEPATAELISFD</sequence>
<comment type="function">
    <text evidence="7">Essential role in endosome membrane invagination and formation of multivesicular bodies, MVBs. Required during gastrulation and appears to regulate early embryonic signaling pathways. Inhibits tyrosine kinase receptor signaling by promoting degradation of the tyrosine-phosphorylated, active receptor, potentially by sorting activated receptors into MVBs. The MVBs are then trafficked to the lysosome where their contents are degraded.</text>
</comment>
<comment type="subunit">
    <text evidence="5 7">Homodimer; in vitro. Interacts with ubiquitin.</text>
</comment>
<comment type="subcellular location">
    <subcellularLocation>
        <location evidence="7">Cytoplasm</location>
        <location evidence="7">Cell cortex</location>
    </subcellularLocation>
    <subcellularLocation>
        <location evidence="7">Cytoplasm</location>
        <location evidence="7">Perinuclear region</location>
    </subcellularLocation>
    <text>Locates to vesicles present in the perinuclear regions of muscle cells and in the periphery of Garland cells of third-instar larvae.</text>
</comment>
<comment type="alternative products">
    <event type="alternative splicing"/>
    <isoform>
        <id>Q960X8-1</id>
        <name>B</name>
        <name>C</name>
        <sequence type="displayed"/>
    </isoform>
    <isoform>
        <id>Q960X8-2</id>
        <name>A</name>
        <sequence type="described" ref="VSP_029168 VSP_029169"/>
    </isoform>
</comment>
<comment type="developmental stage">
    <text evidence="7">Expressed both maternally and zygotically throughout development.</text>
</comment>
<gene>
    <name type="primary">Hrs</name>
    <name type="ORF">CG2903</name>
</gene>
<feature type="chain" id="PRO_0000084070" description="Hepatocyte growth factor-regulated tyrosine kinase substrate">
    <location>
        <begin position="1"/>
        <end position="760"/>
    </location>
</feature>
<feature type="domain" description="VHS" evidence="3 10">
    <location>
        <begin position="13"/>
        <end position="141"/>
    </location>
</feature>
<feature type="domain" description="UIM" evidence="2">
    <location>
        <begin position="263"/>
        <end position="282"/>
    </location>
</feature>
<feature type="zinc finger region" description="FYVE-type" evidence="1 10">
    <location>
        <begin position="158"/>
        <end position="218"/>
    </location>
</feature>
<feature type="region of interest" description="Disordered" evidence="4">
    <location>
        <begin position="275"/>
        <end position="323"/>
    </location>
</feature>
<feature type="region of interest" description="Disordered" evidence="4">
    <location>
        <begin position="338"/>
        <end position="359"/>
    </location>
</feature>
<feature type="region of interest" description="Disordered" evidence="4">
    <location>
        <begin position="602"/>
        <end position="626"/>
    </location>
</feature>
<feature type="region of interest" description="Disordered" evidence="4">
    <location>
        <begin position="644"/>
        <end position="760"/>
    </location>
</feature>
<feature type="compositionally biased region" description="Basic and acidic residues" evidence="4">
    <location>
        <begin position="307"/>
        <end position="316"/>
    </location>
</feature>
<feature type="compositionally biased region" description="Pro residues" evidence="4">
    <location>
        <begin position="349"/>
        <end position="358"/>
    </location>
</feature>
<feature type="compositionally biased region" description="Pro residues" evidence="4">
    <location>
        <begin position="609"/>
        <end position="622"/>
    </location>
</feature>
<feature type="compositionally biased region" description="Low complexity" evidence="4">
    <location>
        <begin position="653"/>
        <end position="694"/>
    </location>
</feature>
<feature type="compositionally biased region" description="Low complexity" evidence="4">
    <location>
        <begin position="706"/>
        <end position="733"/>
    </location>
</feature>
<feature type="compositionally biased region" description="Pro residues" evidence="4">
    <location>
        <begin position="734"/>
        <end position="744"/>
    </location>
</feature>
<feature type="binding site" evidence="1">
    <location>
        <position position="164"/>
    </location>
    <ligand>
        <name>Zn(2+)</name>
        <dbReference type="ChEBI" id="CHEBI:29105"/>
        <label>1</label>
    </ligand>
</feature>
<feature type="binding site" evidence="1">
    <location>
        <position position="167"/>
    </location>
    <ligand>
        <name>Zn(2+)</name>
        <dbReference type="ChEBI" id="CHEBI:29105"/>
        <label>1</label>
    </ligand>
</feature>
<feature type="binding site" evidence="1">
    <location>
        <position position="180"/>
    </location>
    <ligand>
        <name>Zn(2+)</name>
        <dbReference type="ChEBI" id="CHEBI:29105"/>
        <label>2</label>
    </ligand>
</feature>
<feature type="binding site" evidence="1">
    <location>
        <position position="183"/>
    </location>
    <ligand>
        <name>Zn(2+)</name>
        <dbReference type="ChEBI" id="CHEBI:29105"/>
        <label>2</label>
    </ligand>
</feature>
<feature type="binding site" evidence="1">
    <location>
        <position position="188"/>
    </location>
    <ligand>
        <name>Zn(2+)</name>
        <dbReference type="ChEBI" id="CHEBI:29105"/>
        <label>1</label>
    </ligand>
</feature>
<feature type="binding site" evidence="1">
    <location>
        <position position="191"/>
    </location>
    <ligand>
        <name>Zn(2+)</name>
        <dbReference type="ChEBI" id="CHEBI:29105"/>
        <label>1</label>
    </ligand>
</feature>
<feature type="binding site" evidence="1">
    <location>
        <position position="210"/>
    </location>
    <ligand>
        <name>Zn(2+)</name>
        <dbReference type="ChEBI" id="CHEBI:29105"/>
        <label>2</label>
    </ligand>
</feature>
<feature type="binding site" evidence="1">
    <location>
        <position position="213"/>
    </location>
    <ligand>
        <name>Zn(2+)</name>
        <dbReference type="ChEBI" id="CHEBI:29105"/>
        <label>2</label>
    </ligand>
</feature>
<feature type="modified residue" description="Phosphoserine" evidence="9">
    <location>
        <position position="300"/>
    </location>
</feature>
<feature type="modified residue" description="Phosphoserine" evidence="9">
    <location>
        <position position="302"/>
    </location>
</feature>
<feature type="splice variant" id="VSP_029168" description="In isoform A." evidence="10">
    <original>MFRSSFDKNLENAT</original>
    <variation>MSSEEELSIEEESL</variation>
    <location>
        <begin position="1"/>
        <end position="14"/>
    </location>
</feature>
<feature type="splice variant" id="VSP_029169" description="In isoform A." evidence="10">
    <location>
        <begin position="15"/>
        <end position="127"/>
    </location>
</feature>
<feature type="sequence conflict" description="In Ref. 4; AAN71346." evidence="10" ref="4">
    <original>E</original>
    <variation>G</variation>
    <location>
        <position position="471"/>
    </location>
</feature>
<feature type="helix" evidence="12">
    <location>
        <begin position="5"/>
        <end position="14"/>
    </location>
</feature>
<feature type="helix" evidence="12">
    <location>
        <begin position="23"/>
        <end position="34"/>
    </location>
</feature>
<feature type="helix" evidence="12">
    <location>
        <begin position="40"/>
        <end position="51"/>
    </location>
</feature>
<feature type="helix" evidence="12">
    <location>
        <begin position="56"/>
        <end position="72"/>
    </location>
</feature>
<feature type="helix" evidence="12">
    <location>
        <begin position="74"/>
        <end position="81"/>
    </location>
</feature>
<feature type="helix" evidence="12">
    <location>
        <begin position="84"/>
        <end position="96"/>
    </location>
</feature>
<feature type="helix" evidence="12">
    <location>
        <begin position="100"/>
        <end position="116"/>
    </location>
</feature>
<feature type="turn" evidence="12">
    <location>
        <begin position="117"/>
        <end position="119"/>
    </location>
</feature>
<feature type="helix" evidence="12">
    <location>
        <begin position="125"/>
        <end position="135"/>
    </location>
</feature>
<feature type="turn" evidence="12">
    <location>
        <begin position="165"/>
        <end position="167"/>
    </location>
</feature>
<feature type="strand" evidence="12">
    <location>
        <begin position="173"/>
        <end position="175"/>
    </location>
</feature>
<feature type="turn" evidence="12">
    <location>
        <begin position="181"/>
        <end position="183"/>
    </location>
</feature>
<feature type="strand" evidence="12">
    <location>
        <begin position="194"/>
        <end position="198"/>
    </location>
</feature>
<feature type="helix" evidence="12">
    <location>
        <begin position="199"/>
        <end position="201"/>
    </location>
</feature>
<feature type="strand" evidence="12">
    <location>
        <begin position="203"/>
        <end position="209"/>
    </location>
</feature>
<feature type="helix" evidence="12">
    <location>
        <begin position="211"/>
        <end position="219"/>
    </location>
</feature>
<dbReference type="EMBL" id="AY071846">
    <property type="protein sequence ID" value="AAL60055.1"/>
    <property type="molecule type" value="mRNA"/>
</dbReference>
<dbReference type="EMBL" id="AE014134">
    <property type="protein sequence ID" value="AAF51221.2"/>
    <property type="molecule type" value="Genomic_DNA"/>
</dbReference>
<dbReference type="EMBL" id="AE014134">
    <property type="protein sequence ID" value="AAF51222.1"/>
    <property type="molecule type" value="Genomic_DNA"/>
</dbReference>
<dbReference type="EMBL" id="AE014134">
    <property type="protein sequence ID" value="AAN10412.2"/>
    <property type="molecule type" value="Genomic_DNA"/>
</dbReference>
<dbReference type="EMBL" id="AY051789">
    <property type="protein sequence ID" value="AAK93213.1"/>
    <property type="molecule type" value="mRNA"/>
</dbReference>
<dbReference type="EMBL" id="BT001591">
    <property type="protein sequence ID" value="AAN71346.1"/>
    <property type="molecule type" value="mRNA"/>
</dbReference>
<dbReference type="RefSeq" id="NP_525099.3">
    <molecule id="Q960X8-1"/>
    <property type="nucleotide sequence ID" value="NM_080360.5"/>
</dbReference>
<dbReference type="RefSeq" id="NP_722830.2">
    <molecule id="Q960X8-1"/>
    <property type="nucleotide sequence ID" value="NM_164496.1"/>
</dbReference>
<dbReference type="RefSeq" id="NP_722831.1">
    <molecule id="Q960X8-2"/>
    <property type="nucleotide sequence ID" value="NM_164497.1"/>
</dbReference>
<dbReference type="PDB" id="1DVP">
    <property type="method" value="X-ray"/>
    <property type="resolution" value="2.00 A"/>
    <property type="chains" value="A=1-219"/>
</dbReference>
<dbReference type="PDBsum" id="1DVP"/>
<dbReference type="SMR" id="Q960X8"/>
<dbReference type="BioGRID" id="59683">
    <property type="interactions" value="60"/>
</dbReference>
<dbReference type="ComplexPortal" id="CPX-2452">
    <property type="entry name" value="ESCRT-0 complex"/>
</dbReference>
<dbReference type="DIP" id="DIP-32844N"/>
<dbReference type="FunCoup" id="Q960X8">
    <property type="interactions" value="1830"/>
</dbReference>
<dbReference type="IntAct" id="Q960X8">
    <property type="interactions" value="8"/>
</dbReference>
<dbReference type="STRING" id="7227.FBpp0088691"/>
<dbReference type="GlyGen" id="Q960X8">
    <property type="glycosylation" value="1 site"/>
</dbReference>
<dbReference type="iPTMnet" id="Q960X8"/>
<dbReference type="PaxDb" id="7227-FBpp0088692"/>
<dbReference type="EnsemblMetazoa" id="FBtr0089749">
    <molecule id="Q960X8-2"/>
    <property type="protein sequence ID" value="FBpp0088690"/>
    <property type="gene ID" value="FBgn0031450"/>
</dbReference>
<dbReference type="EnsemblMetazoa" id="FBtr0089750">
    <molecule id="Q960X8-1"/>
    <property type="protein sequence ID" value="FBpp0088691"/>
    <property type="gene ID" value="FBgn0031450"/>
</dbReference>
<dbReference type="EnsemblMetazoa" id="FBtr0089751">
    <molecule id="Q960X8-1"/>
    <property type="protein sequence ID" value="FBpp0088692"/>
    <property type="gene ID" value="FBgn0031450"/>
</dbReference>
<dbReference type="GeneID" id="33458"/>
<dbReference type="KEGG" id="dme:Dmel_CG2903"/>
<dbReference type="AGR" id="FB:FBgn0031450"/>
<dbReference type="CTD" id="33458"/>
<dbReference type="FlyBase" id="FBgn0031450">
    <property type="gene designation" value="Hrs"/>
</dbReference>
<dbReference type="VEuPathDB" id="VectorBase:FBgn0031450"/>
<dbReference type="eggNOG" id="KOG1818">
    <property type="taxonomic scope" value="Eukaryota"/>
</dbReference>
<dbReference type="GeneTree" id="ENSGT00940000158297"/>
<dbReference type="HOGENOM" id="CLU_013062_0_0_1"/>
<dbReference type="InParanoid" id="Q960X8"/>
<dbReference type="OMA" id="DQQCSAK"/>
<dbReference type="OrthoDB" id="957735at2759"/>
<dbReference type="PhylomeDB" id="Q960X8"/>
<dbReference type="Reactome" id="R-DME-182971">
    <property type="pathway name" value="EGFR downregulation"/>
</dbReference>
<dbReference type="Reactome" id="R-DME-432720">
    <property type="pathway name" value="Lysosome Vesicle Biogenesis"/>
</dbReference>
<dbReference type="Reactome" id="R-DME-5689880">
    <property type="pathway name" value="Ub-specific processing proteases"/>
</dbReference>
<dbReference type="Reactome" id="R-DME-8856825">
    <property type="pathway name" value="Cargo recognition for clathrin-mediated endocytosis"/>
</dbReference>
<dbReference type="Reactome" id="R-DME-8856828">
    <property type="pathway name" value="Clathrin-mediated endocytosis"/>
</dbReference>
<dbReference type="Reactome" id="R-DME-9013420">
    <property type="pathway name" value="RHOU GTPase cycle"/>
</dbReference>
<dbReference type="Reactome" id="R-DME-917729">
    <property type="pathway name" value="Endosomal Sorting Complex Required For Transport (ESCRT)"/>
</dbReference>
<dbReference type="Reactome" id="R-DME-9706019">
    <property type="pathway name" value="RHOBTB3 ATPase cycle"/>
</dbReference>
<dbReference type="SignaLink" id="Q960X8"/>
<dbReference type="BioGRID-ORCS" id="33458">
    <property type="hits" value="0 hits in 1 CRISPR screen"/>
</dbReference>
<dbReference type="EvolutionaryTrace" id="Q960X8"/>
<dbReference type="GenomeRNAi" id="33458"/>
<dbReference type="PRO" id="PR:Q960X8"/>
<dbReference type="Proteomes" id="UP000000803">
    <property type="component" value="Chromosome 2L"/>
</dbReference>
<dbReference type="Bgee" id="FBgn0031450">
    <property type="expression patterns" value="Expressed in outer photoreceptor cell (Drosophila) in insect head and 163 other cell types or tissues"/>
</dbReference>
<dbReference type="ExpressionAtlas" id="Q960X8">
    <property type="expression patterns" value="baseline and differential"/>
</dbReference>
<dbReference type="GO" id="GO:0005938">
    <property type="term" value="C:cell cortex"/>
    <property type="evidence" value="ECO:0007669"/>
    <property type="project" value="UniProtKB-SubCell"/>
</dbReference>
<dbReference type="GO" id="GO:0005769">
    <property type="term" value="C:early endosome"/>
    <property type="evidence" value="ECO:0000318"/>
    <property type="project" value="GO_Central"/>
</dbReference>
<dbReference type="GO" id="GO:0005768">
    <property type="term" value="C:endosome"/>
    <property type="evidence" value="ECO:0000314"/>
    <property type="project" value="FlyBase"/>
</dbReference>
<dbReference type="GO" id="GO:0048471">
    <property type="term" value="C:perinuclear region of cytoplasm"/>
    <property type="evidence" value="ECO:0007669"/>
    <property type="project" value="UniProtKB-SubCell"/>
</dbReference>
<dbReference type="GO" id="GO:0035091">
    <property type="term" value="F:phosphatidylinositol binding"/>
    <property type="evidence" value="ECO:0007669"/>
    <property type="project" value="InterPro"/>
</dbReference>
<dbReference type="GO" id="GO:0043130">
    <property type="term" value="F:ubiquitin binding"/>
    <property type="evidence" value="ECO:0000314"/>
    <property type="project" value="FlyBase"/>
</dbReference>
<dbReference type="GO" id="GO:0008270">
    <property type="term" value="F:zinc ion binding"/>
    <property type="evidence" value="ECO:0007669"/>
    <property type="project" value="UniProtKB-KW"/>
</dbReference>
<dbReference type="GO" id="GO:0045022">
    <property type="term" value="P:early endosome to late endosome transport"/>
    <property type="evidence" value="ECO:0000315"/>
    <property type="project" value="FlyBase"/>
</dbReference>
<dbReference type="GO" id="GO:0032456">
    <property type="term" value="P:endocytic recycling"/>
    <property type="evidence" value="ECO:0000315"/>
    <property type="project" value="FlyBase"/>
</dbReference>
<dbReference type="GO" id="GO:0006897">
    <property type="term" value="P:endocytosis"/>
    <property type="evidence" value="ECO:0000315"/>
    <property type="project" value="FlyBase"/>
</dbReference>
<dbReference type="GO" id="GO:0016197">
    <property type="term" value="P:endosomal transport"/>
    <property type="evidence" value="ECO:0000315"/>
    <property type="project" value="FlyBase"/>
</dbReference>
<dbReference type="GO" id="GO:0032509">
    <property type="term" value="P:endosome transport via multivesicular body sorting pathway"/>
    <property type="evidence" value="ECO:0000315"/>
    <property type="project" value="FlyBase"/>
</dbReference>
<dbReference type="GO" id="GO:1990182">
    <property type="term" value="P:exosomal secretion"/>
    <property type="evidence" value="ECO:0000315"/>
    <property type="project" value="FlyBase"/>
</dbReference>
<dbReference type="GO" id="GO:0045879">
    <property type="term" value="P:negative regulation of smoothened signaling pathway"/>
    <property type="evidence" value="ECO:0000315"/>
    <property type="project" value="FlyBase"/>
</dbReference>
<dbReference type="GO" id="GO:0120177">
    <property type="term" value="P:negative regulation of torso signaling pathway"/>
    <property type="evidence" value="ECO:0000315"/>
    <property type="project" value="FlyBase"/>
</dbReference>
<dbReference type="GO" id="GO:0016322">
    <property type="term" value="P:neuron remodeling"/>
    <property type="evidence" value="ECO:0000316"/>
    <property type="project" value="FlyBase"/>
</dbReference>
<dbReference type="GO" id="GO:1903688">
    <property type="term" value="P:positive regulation of border follicle cell migration"/>
    <property type="evidence" value="ECO:0000315"/>
    <property type="project" value="FlyBase"/>
</dbReference>
<dbReference type="GO" id="GO:0045752">
    <property type="term" value="P:positive regulation of Toll signaling pathway"/>
    <property type="evidence" value="ECO:0000315"/>
    <property type="project" value="FlyBase"/>
</dbReference>
<dbReference type="GO" id="GO:0061357">
    <property type="term" value="P:positive regulation of Wnt protein secretion"/>
    <property type="evidence" value="ECO:0000315"/>
    <property type="project" value="FlyBase"/>
</dbReference>
<dbReference type="GO" id="GO:0031623">
    <property type="term" value="P:receptor internalization"/>
    <property type="evidence" value="ECO:0000315"/>
    <property type="project" value="FlyBase"/>
</dbReference>
<dbReference type="GO" id="GO:0006898">
    <property type="term" value="P:receptor-mediated endocytosis"/>
    <property type="evidence" value="ECO:0000315"/>
    <property type="project" value="FlyBase"/>
</dbReference>
<dbReference type="GO" id="GO:0051726">
    <property type="term" value="P:regulation of cell cycle"/>
    <property type="evidence" value="ECO:0000316"/>
    <property type="project" value="FlyBase"/>
</dbReference>
<dbReference type="GO" id="GO:2000274">
    <property type="term" value="P:regulation of epithelial cell migration, open tracheal system"/>
    <property type="evidence" value="ECO:0000315"/>
    <property type="project" value="FlyBase"/>
</dbReference>
<dbReference type="CDD" id="cd15720">
    <property type="entry name" value="FYVE_Hrs"/>
    <property type="match status" value="1"/>
</dbReference>
<dbReference type="CDD" id="cd21387">
    <property type="entry name" value="GAT_Hrs"/>
    <property type="match status" value="1"/>
</dbReference>
<dbReference type="CDD" id="cd03569">
    <property type="entry name" value="VHS_Hrs"/>
    <property type="match status" value="1"/>
</dbReference>
<dbReference type="FunFam" id="1.20.5.1940:FF:000003">
    <property type="entry name" value="Hepatocyte growth factor-regulated tyrosine kinase substrate"/>
    <property type="match status" value="1"/>
</dbReference>
<dbReference type="FunFam" id="1.25.40.90:FF:000014">
    <property type="entry name" value="Hepatocyte growth factor-regulated tyrosine kinase substrate"/>
    <property type="match status" value="1"/>
</dbReference>
<dbReference type="FunFam" id="3.30.40.10:FF:000028">
    <property type="entry name" value="Putative hepatocyte growth factor-regulated tyrosine kinase substrate"/>
    <property type="match status" value="1"/>
</dbReference>
<dbReference type="Gene3D" id="1.20.5.1940">
    <property type="match status" value="1"/>
</dbReference>
<dbReference type="Gene3D" id="1.25.40.90">
    <property type="match status" value="1"/>
</dbReference>
<dbReference type="Gene3D" id="3.30.40.10">
    <property type="entry name" value="Zinc/RING finger domain, C3HC4 (zinc finger)"/>
    <property type="match status" value="1"/>
</dbReference>
<dbReference type="InterPro" id="IPR008942">
    <property type="entry name" value="ENTH_VHS"/>
</dbReference>
<dbReference type="InterPro" id="IPR017073">
    <property type="entry name" value="HGS/VPS27"/>
</dbReference>
<dbReference type="InterPro" id="IPR024641">
    <property type="entry name" value="HRS_helical"/>
</dbReference>
<dbReference type="InterPro" id="IPR003903">
    <property type="entry name" value="UIM_dom"/>
</dbReference>
<dbReference type="InterPro" id="IPR002014">
    <property type="entry name" value="VHS_dom"/>
</dbReference>
<dbReference type="InterPro" id="IPR000306">
    <property type="entry name" value="Znf_FYVE"/>
</dbReference>
<dbReference type="InterPro" id="IPR017455">
    <property type="entry name" value="Znf_FYVE-rel"/>
</dbReference>
<dbReference type="InterPro" id="IPR011011">
    <property type="entry name" value="Znf_FYVE_PHD"/>
</dbReference>
<dbReference type="InterPro" id="IPR013083">
    <property type="entry name" value="Znf_RING/FYVE/PHD"/>
</dbReference>
<dbReference type="PANTHER" id="PTHR46275">
    <property type="entry name" value="HEPATOCYTE GROWTH FACTOR-REGULATED TYROSINE KINASE SUBSTRATE"/>
    <property type="match status" value="1"/>
</dbReference>
<dbReference type="PANTHER" id="PTHR46275:SF1">
    <property type="entry name" value="HEPATOCYTE GROWTH FACTOR-REGULATED TYROSINE KINASE SUBSTRATE"/>
    <property type="match status" value="1"/>
</dbReference>
<dbReference type="Pfam" id="PF01363">
    <property type="entry name" value="FYVE"/>
    <property type="match status" value="1"/>
</dbReference>
<dbReference type="Pfam" id="PF12210">
    <property type="entry name" value="Hrs_helical"/>
    <property type="match status" value="1"/>
</dbReference>
<dbReference type="Pfam" id="PF00790">
    <property type="entry name" value="VHS"/>
    <property type="match status" value="1"/>
</dbReference>
<dbReference type="PIRSF" id="PIRSF036956">
    <property type="entry name" value="Hrs_Vps27"/>
    <property type="match status" value="1"/>
</dbReference>
<dbReference type="SMART" id="SM00064">
    <property type="entry name" value="FYVE"/>
    <property type="match status" value="1"/>
</dbReference>
<dbReference type="SMART" id="SM00288">
    <property type="entry name" value="VHS"/>
    <property type="match status" value="1"/>
</dbReference>
<dbReference type="SUPFAM" id="SSF48464">
    <property type="entry name" value="ENTH/VHS domain"/>
    <property type="match status" value="1"/>
</dbReference>
<dbReference type="SUPFAM" id="SSF57903">
    <property type="entry name" value="FYVE/PHD zinc finger"/>
    <property type="match status" value="1"/>
</dbReference>
<dbReference type="PROSITE" id="PS50330">
    <property type="entry name" value="UIM"/>
    <property type="match status" value="1"/>
</dbReference>
<dbReference type="PROSITE" id="PS50179">
    <property type="entry name" value="VHS"/>
    <property type="match status" value="1"/>
</dbReference>
<dbReference type="PROSITE" id="PS50178">
    <property type="entry name" value="ZF_FYVE"/>
    <property type="match status" value="1"/>
</dbReference>
<keyword id="KW-0002">3D-structure</keyword>
<keyword id="KW-0025">Alternative splicing</keyword>
<keyword id="KW-0963">Cytoplasm</keyword>
<keyword id="KW-0217">Developmental protein</keyword>
<keyword id="KW-0479">Metal-binding</keyword>
<keyword id="KW-0597">Phosphoprotein</keyword>
<keyword id="KW-1185">Reference proteome</keyword>
<keyword id="KW-0862">Zinc</keyword>
<keyword id="KW-0863">Zinc-finger</keyword>
<accession>Q960X8</accession>
<accession>A4V018</accession>
<accession>Q8IGU6</accession>
<accession>Q9VQF2</accession>
<accession>Q9VQF3</accession>
<protein>
    <recommendedName>
        <fullName>Hepatocyte growth factor-regulated tyrosine kinase substrate</fullName>
    </recommendedName>
</protein>
<evidence type="ECO:0000255" key="1">
    <source>
        <dbReference type="PROSITE-ProRule" id="PRU00091"/>
    </source>
</evidence>
<evidence type="ECO:0000255" key="2">
    <source>
        <dbReference type="PROSITE-ProRule" id="PRU00213"/>
    </source>
</evidence>
<evidence type="ECO:0000255" key="3">
    <source>
        <dbReference type="PROSITE-ProRule" id="PRU00218"/>
    </source>
</evidence>
<evidence type="ECO:0000256" key="4">
    <source>
        <dbReference type="SAM" id="MobiDB-lite"/>
    </source>
</evidence>
<evidence type="ECO:0000269" key="5">
    <source>
    </source>
</evidence>
<evidence type="ECO:0000269" key="6">
    <source>
    </source>
</evidence>
<evidence type="ECO:0000269" key="7">
    <source>
    </source>
</evidence>
<evidence type="ECO:0000269" key="8">
    <source>
    </source>
</evidence>
<evidence type="ECO:0000269" key="9">
    <source>
    </source>
</evidence>
<evidence type="ECO:0000305" key="10"/>
<evidence type="ECO:0000312" key="11">
    <source>
        <dbReference type="EMBL" id="AAK93213.1"/>
    </source>
</evidence>
<evidence type="ECO:0007829" key="12">
    <source>
        <dbReference type="PDB" id="1DVP"/>
    </source>
</evidence>
<name>HRS_DROME</name>
<reference evidence="10" key="1">
    <citation type="journal article" date="2002" name="Cell">
        <title>Hrs regulates endosome membrane invagination and tyrosine kinase receptor signaling in Drosophila.</title>
        <authorList>
            <person name="Lloyd T.E."/>
            <person name="Atkinson R."/>
            <person name="Wu M.N."/>
            <person name="Zhou Y."/>
            <person name="Pennetta G."/>
            <person name="Bellen H.J."/>
        </authorList>
    </citation>
    <scope>NUCLEOTIDE SEQUENCE [MRNA] (ISOFORM B)</scope>
    <scope>FUNCTION</scope>
    <scope>SUBCELLULAR LOCATION</scope>
    <scope>DEVELOPMENTAL STAGE</scope>
    <scope>INTERACTION WITH UBI-P63E</scope>
    <source>
        <strain>Berkeley</strain>
        <tissue>Embryo</tissue>
    </source>
</reference>
<reference evidence="10" key="2">
    <citation type="journal article" date="2000" name="Science">
        <title>The genome sequence of Drosophila melanogaster.</title>
        <authorList>
            <person name="Adams M.D."/>
            <person name="Celniker S.E."/>
            <person name="Holt R.A."/>
            <person name="Evans C.A."/>
            <person name="Gocayne J.D."/>
            <person name="Amanatides P.G."/>
            <person name="Scherer S.E."/>
            <person name="Li P.W."/>
            <person name="Hoskins R.A."/>
            <person name="Galle R.F."/>
            <person name="George R.A."/>
            <person name="Lewis S.E."/>
            <person name="Richards S."/>
            <person name="Ashburner M."/>
            <person name="Henderson S.N."/>
            <person name="Sutton G.G."/>
            <person name="Wortman J.R."/>
            <person name="Yandell M.D."/>
            <person name="Zhang Q."/>
            <person name="Chen L.X."/>
            <person name="Brandon R.C."/>
            <person name="Rogers Y.-H.C."/>
            <person name="Blazej R.G."/>
            <person name="Champe M."/>
            <person name="Pfeiffer B.D."/>
            <person name="Wan K.H."/>
            <person name="Doyle C."/>
            <person name="Baxter E.G."/>
            <person name="Helt G."/>
            <person name="Nelson C.R."/>
            <person name="Miklos G.L.G."/>
            <person name="Abril J.F."/>
            <person name="Agbayani A."/>
            <person name="An H.-J."/>
            <person name="Andrews-Pfannkoch C."/>
            <person name="Baldwin D."/>
            <person name="Ballew R.M."/>
            <person name="Basu A."/>
            <person name="Baxendale J."/>
            <person name="Bayraktaroglu L."/>
            <person name="Beasley E.M."/>
            <person name="Beeson K.Y."/>
            <person name="Benos P.V."/>
            <person name="Berman B.P."/>
            <person name="Bhandari D."/>
            <person name="Bolshakov S."/>
            <person name="Borkova D."/>
            <person name="Botchan M.R."/>
            <person name="Bouck J."/>
            <person name="Brokstein P."/>
            <person name="Brottier P."/>
            <person name="Burtis K.C."/>
            <person name="Busam D.A."/>
            <person name="Butler H."/>
            <person name="Cadieu E."/>
            <person name="Center A."/>
            <person name="Chandra I."/>
            <person name="Cherry J.M."/>
            <person name="Cawley S."/>
            <person name="Dahlke C."/>
            <person name="Davenport L.B."/>
            <person name="Davies P."/>
            <person name="de Pablos B."/>
            <person name="Delcher A."/>
            <person name="Deng Z."/>
            <person name="Mays A.D."/>
            <person name="Dew I."/>
            <person name="Dietz S.M."/>
            <person name="Dodson K."/>
            <person name="Doup L.E."/>
            <person name="Downes M."/>
            <person name="Dugan-Rocha S."/>
            <person name="Dunkov B.C."/>
            <person name="Dunn P."/>
            <person name="Durbin K.J."/>
            <person name="Evangelista C.C."/>
            <person name="Ferraz C."/>
            <person name="Ferriera S."/>
            <person name="Fleischmann W."/>
            <person name="Fosler C."/>
            <person name="Gabrielian A.E."/>
            <person name="Garg N.S."/>
            <person name="Gelbart W.M."/>
            <person name="Glasser K."/>
            <person name="Glodek A."/>
            <person name="Gong F."/>
            <person name="Gorrell J.H."/>
            <person name="Gu Z."/>
            <person name="Guan P."/>
            <person name="Harris M."/>
            <person name="Harris N.L."/>
            <person name="Harvey D.A."/>
            <person name="Heiman T.J."/>
            <person name="Hernandez J.R."/>
            <person name="Houck J."/>
            <person name="Hostin D."/>
            <person name="Houston K.A."/>
            <person name="Howland T.J."/>
            <person name="Wei M.-H."/>
            <person name="Ibegwam C."/>
            <person name="Jalali M."/>
            <person name="Kalush F."/>
            <person name="Karpen G.H."/>
            <person name="Ke Z."/>
            <person name="Kennison J.A."/>
            <person name="Ketchum K.A."/>
            <person name="Kimmel B.E."/>
            <person name="Kodira C.D."/>
            <person name="Kraft C.L."/>
            <person name="Kravitz S."/>
            <person name="Kulp D."/>
            <person name="Lai Z."/>
            <person name="Lasko P."/>
            <person name="Lei Y."/>
            <person name="Levitsky A.A."/>
            <person name="Li J.H."/>
            <person name="Li Z."/>
            <person name="Liang Y."/>
            <person name="Lin X."/>
            <person name="Liu X."/>
            <person name="Mattei B."/>
            <person name="McIntosh T.C."/>
            <person name="McLeod M.P."/>
            <person name="McPherson D."/>
            <person name="Merkulov G."/>
            <person name="Milshina N.V."/>
            <person name="Mobarry C."/>
            <person name="Morris J."/>
            <person name="Moshrefi A."/>
            <person name="Mount S.M."/>
            <person name="Moy M."/>
            <person name="Murphy B."/>
            <person name="Murphy L."/>
            <person name="Muzny D.M."/>
            <person name="Nelson D.L."/>
            <person name="Nelson D.R."/>
            <person name="Nelson K.A."/>
            <person name="Nixon K."/>
            <person name="Nusskern D.R."/>
            <person name="Pacleb J.M."/>
            <person name="Palazzolo M."/>
            <person name="Pittman G.S."/>
            <person name="Pan S."/>
            <person name="Pollard J."/>
            <person name="Puri V."/>
            <person name="Reese M.G."/>
            <person name="Reinert K."/>
            <person name="Remington K."/>
            <person name="Saunders R.D.C."/>
            <person name="Scheeler F."/>
            <person name="Shen H."/>
            <person name="Shue B.C."/>
            <person name="Siden-Kiamos I."/>
            <person name="Simpson M."/>
            <person name="Skupski M.P."/>
            <person name="Smith T.J."/>
            <person name="Spier E."/>
            <person name="Spradling A.C."/>
            <person name="Stapleton M."/>
            <person name="Strong R."/>
            <person name="Sun E."/>
            <person name="Svirskas R."/>
            <person name="Tector C."/>
            <person name="Turner R."/>
            <person name="Venter E."/>
            <person name="Wang A.H."/>
            <person name="Wang X."/>
            <person name="Wang Z.-Y."/>
            <person name="Wassarman D.A."/>
            <person name="Weinstock G.M."/>
            <person name="Weissenbach J."/>
            <person name="Williams S.M."/>
            <person name="Woodage T."/>
            <person name="Worley K.C."/>
            <person name="Wu D."/>
            <person name="Yang S."/>
            <person name="Yao Q.A."/>
            <person name="Ye J."/>
            <person name="Yeh R.-F."/>
            <person name="Zaveri J.S."/>
            <person name="Zhan M."/>
            <person name="Zhang G."/>
            <person name="Zhao Q."/>
            <person name="Zheng L."/>
            <person name="Zheng X.H."/>
            <person name="Zhong F.N."/>
            <person name="Zhong W."/>
            <person name="Zhou X."/>
            <person name="Zhu S.C."/>
            <person name="Zhu X."/>
            <person name="Smith H.O."/>
            <person name="Gibbs R.A."/>
            <person name="Myers E.W."/>
            <person name="Rubin G.M."/>
            <person name="Venter J.C."/>
        </authorList>
    </citation>
    <scope>NUCLEOTIDE SEQUENCE [LARGE SCALE GENOMIC DNA]</scope>
    <source>
        <strain evidence="6">Berkeley</strain>
    </source>
</reference>
<reference evidence="10" key="3">
    <citation type="journal article" date="2002" name="Genome Biol.">
        <title>Annotation of the Drosophila melanogaster euchromatic genome: a systematic review.</title>
        <authorList>
            <person name="Misra S."/>
            <person name="Crosby M.A."/>
            <person name="Mungall C.J."/>
            <person name="Matthews B.B."/>
            <person name="Campbell K.S."/>
            <person name="Hradecky P."/>
            <person name="Huang Y."/>
            <person name="Kaminker J.S."/>
            <person name="Millburn G.H."/>
            <person name="Prochnik S.E."/>
            <person name="Smith C.D."/>
            <person name="Tupy J.L."/>
            <person name="Whitfield E.J."/>
            <person name="Bayraktaroglu L."/>
            <person name="Berman B.P."/>
            <person name="Bettencourt B.R."/>
            <person name="Celniker S.E."/>
            <person name="de Grey A.D.N.J."/>
            <person name="Drysdale R.A."/>
            <person name="Harris N.L."/>
            <person name="Richter J."/>
            <person name="Russo S."/>
            <person name="Schroeder A.J."/>
            <person name="Shu S.Q."/>
            <person name="Stapleton M."/>
            <person name="Yamada C."/>
            <person name="Ashburner M."/>
            <person name="Gelbart W.M."/>
            <person name="Rubin G.M."/>
            <person name="Lewis S.E."/>
        </authorList>
    </citation>
    <scope>GENOME REANNOTATION</scope>
    <scope>ALTERNATIVE SPLICING</scope>
    <source>
        <strain>Berkeley</strain>
    </source>
</reference>
<reference evidence="10" key="4">
    <citation type="journal article" date="2002" name="Genome Biol.">
        <title>A Drosophila full-length cDNA resource.</title>
        <authorList>
            <person name="Stapleton M."/>
            <person name="Carlson J.W."/>
            <person name="Brokstein P."/>
            <person name="Yu C."/>
            <person name="Champe M."/>
            <person name="George R.A."/>
            <person name="Guarin H."/>
            <person name="Kronmiller B."/>
            <person name="Pacleb J.M."/>
            <person name="Park S."/>
            <person name="Wan K.H."/>
            <person name="Rubin G.M."/>
            <person name="Celniker S.E."/>
        </authorList>
    </citation>
    <scope>NUCLEOTIDE SEQUENCE [LARGE SCALE MRNA] (ISOFORM B)</scope>
    <source>
        <strain evidence="8">Berkeley</strain>
        <tissue evidence="8">Embryo</tissue>
    </source>
</reference>
<reference key="5">
    <citation type="journal article" date="2008" name="J. Proteome Res.">
        <title>Phosphoproteome analysis of Drosophila melanogaster embryos.</title>
        <authorList>
            <person name="Zhai B."/>
            <person name="Villen J."/>
            <person name="Beausoleil S.A."/>
            <person name="Mintseris J."/>
            <person name="Gygi S.P."/>
        </authorList>
    </citation>
    <scope>PHOSPHORYLATION [LARGE SCALE ANALYSIS] AT SER-300 AND SER-302</scope>
    <scope>IDENTIFICATION BY MASS SPECTROMETRY</scope>
    <source>
        <tissue>Embryo</tissue>
    </source>
</reference>
<reference evidence="10" key="6">
    <citation type="journal article" date="2000" name="Cell">
        <title>Crystal structure of the VHS and FYVE tandem domains of Hrs, a protein involved in membrane trafficking and signal transduction.</title>
        <authorList>
            <person name="Mao Y."/>
            <person name="Nickitenko A."/>
            <person name="Duan X."/>
            <person name="Lloyd T.E."/>
            <person name="Wu M.N."/>
            <person name="Bellen H."/>
            <person name="Quiocho F.A."/>
        </authorList>
    </citation>
    <scope>X-RAY CRYSTALLOGRAPHY (2.0 ANGSTROMS)</scope>
    <scope>HOMODIMERIZATION</scope>
</reference>